<accession>P22608</accession>
<accession>Q9HVQ0</accession>
<organism>
    <name type="scientific">Pseudomonas aeruginosa (strain ATCC 15692 / DSM 22644 / CIP 104116 / JCM 14847 / LMG 12228 / 1C / PRS 101 / PAO1)</name>
    <dbReference type="NCBI Taxonomy" id="208964"/>
    <lineage>
        <taxon>Bacteria</taxon>
        <taxon>Pseudomonadati</taxon>
        <taxon>Pseudomonadota</taxon>
        <taxon>Gammaproteobacteria</taxon>
        <taxon>Pseudomonadales</taxon>
        <taxon>Pseudomonadaceae</taxon>
        <taxon>Pseudomonas</taxon>
    </lineage>
</organism>
<keyword id="KW-0067">ATP-binding</keyword>
<keyword id="KW-0963">Cytoplasm</keyword>
<keyword id="KW-1029">Fimbrium biogenesis</keyword>
<keyword id="KW-0479">Metal-binding</keyword>
<keyword id="KW-0547">Nucleotide-binding</keyword>
<keyword id="KW-0653">Protein transport</keyword>
<keyword id="KW-1185">Reference proteome</keyword>
<keyword id="KW-0813">Transport</keyword>
<keyword id="KW-0862">Zinc</keyword>
<sequence length="566" mass="62328">MNDSIQLSGLSRQLVQANLLDEKTAVQAQAQAQRNKLSLVTHLVQSKLVSGLALAELSAEQFGIAYCDLNSLDKESFPRDAISEKLVRQHRVIPLWRRGNKLFVGISDPANHQAINDVQFSTGLTTEAILVEDDKLGLAIDKLFESATDGLAGLDDVDLEGLDIGSADKSTQEDASAEADDAPVVRFVNKMLLDAIKGGSSDLHFEPYEKIYRVRFRTDGMLHEVAKPPIQLASRISARLKVMAGLDISERRKPQDGRIKMRVSKTKSIDFRVNTLPTLWGEKIVMRILDSSSAQMGIDALGYEEDQKELYLAALKQPQGMILVTGPTGSGKTVSLYTGLNILNTTDINISTAEDPVEINLEGINQVNVNPRQGMDFSQALRAFLRQDPDVIMVGEIRDLETAEIAIKAAQTGHMVMSTLHTNSAAETLTRLLNMGVPAFNLATSVNLIIAQRLARKLCSHCKKEHEVPRETLLHEGFPEDKIGTFKLYSPVGCDHCKNGYKGRVGIYEVVKNTPALQRIIMEEGNSIEIAEQARKEGFNDLRTSGLLKAMQGITSLEEVNRVTKD</sequence>
<proteinExistence type="evidence at protein level"/>
<reference key="1">
    <citation type="journal article" date="1990" name="J. Bacteriol.">
        <title>Products of three accessory genes, pilB, pilC, and pilD, are required for biogenesis of Pseudomonas aeruginosa pili.</title>
        <authorList>
            <person name="Nunn D."/>
            <person name="Bergman S."/>
            <person name="Lory S."/>
        </authorList>
    </citation>
    <scope>NUCLEOTIDE SEQUENCE [GENOMIC DNA]</scope>
    <scope>FUNCTION</scope>
    <scope>DISRUPTION PHENOTYPE</scope>
    <source>
        <strain>PAK</strain>
    </source>
</reference>
<reference key="2">
    <citation type="journal article" date="2000" name="Nature">
        <title>Complete genome sequence of Pseudomonas aeruginosa PAO1, an opportunistic pathogen.</title>
        <authorList>
            <person name="Stover C.K."/>
            <person name="Pham X.-Q.T."/>
            <person name="Erwin A.L."/>
            <person name="Mizoguchi S.D."/>
            <person name="Warrener P."/>
            <person name="Hickey M.J."/>
            <person name="Brinkman F.S.L."/>
            <person name="Hufnagle W.O."/>
            <person name="Kowalik D.J."/>
            <person name="Lagrou M."/>
            <person name="Garber R.L."/>
            <person name="Goltry L."/>
            <person name="Tolentino E."/>
            <person name="Westbrock-Wadman S."/>
            <person name="Yuan Y."/>
            <person name="Brody L.L."/>
            <person name="Coulter S.N."/>
            <person name="Folger K.R."/>
            <person name="Kas A."/>
            <person name="Larbig K."/>
            <person name="Lim R.M."/>
            <person name="Smith K.A."/>
            <person name="Spencer D.H."/>
            <person name="Wong G.K.-S."/>
            <person name="Wu Z."/>
            <person name="Paulsen I.T."/>
            <person name="Reizer J."/>
            <person name="Saier M.H. Jr."/>
            <person name="Hancock R.E.W."/>
            <person name="Lory S."/>
            <person name="Olson M.V."/>
        </authorList>
    </citation>
    <scope>NUCLEOTIDE SEQUENCE [LARGE SCALE GENOMIC DNA]</scope>
    <source>
        <strain>ATCC 15692 / DSM 22644 / CIP 104116 / JCM 14847 / LMG 12228 / 1C / PRS 101 / PAO1</strain>
    </source>
</reference>
<reference key="3">
    <citation type="journal article" date="1993" name="J. Bacteriol.">
        <title>Mutations in the consensus ATP-binding sites of XcpR and PilB eliminate extracellular protein secretion and pilus biogenesis in Pseudomonas aeruginosa.</title>
        <authorList>
            <person name="Turner L.R."/>
            <person name="Lara J.C."/>
            <person name="Nunn D.N."/>
            <person name="Lory S."/>
        </authorList>
    </citation>
    <scope>MUTAGENESIS OF GLY-331</scope>
    <scope>FUNCTION</scope>
    <scope>DOMAIN</scope>
</reference>
<reference key="4">
    <citation type="journal article" date="2005" name="J. Bacteriol.">
        <title>Disparate subcellular localization patterns of Pseudomonas aeruginosa Type IV pilus ATPases involved in twitching motility.</title>
        <authorList>
            <person name="Chiang P."/>
            <person name="Habash M."/>
            <person name="Burrows L.L."/>
        </authorList>
    </citation>
    <scope>FUNCTION</scope>
    <scope>SUBCELLULAR LOCATION</scope>
    <scope>DISRUPTION PHENOTYPE</scope>
</reference>
<reference key="5">
    <citation type="journal article" date="2008" name="Microbiology">
        <title>Functional role of conserved residues in the characteristic secretion NTPase motifs of the Pseudomonas aeruginosa type IV pilus motor proteins PilB, PilT and PilU.</title>
        <authorList>
            <person name="Chiang P."/>
            <person name="Sampaleanu L.M."/>
            <person name="Ayers M."/>
            <person name="Pahuta M."/>
            <person name="Howell P.L."/>
            <person name="Burrows L.L."/>
        </authorList>
    </citation>
    <scope>FUNCTION</scope>
    <scope>MUTAGENESIS OF GLU-354; ASP-355; GLU-358; GLU-396; HIS-414 AND HIS-421</scope>
    <source>
        <strain>PAK</strain>
    </source>
</reference>
<reference key="6">
    <citation type="journal article" date="2013" name="J. Biol. Chem.">
        <title>The platform protein is essential for type IV pilus biogenesis.</title>
        <authorList>
            <person name="Takhar H.K."/>
            <person name="Kemp K."/>
            <person name="Kim M."/>
            <person name="Howell P.L."/>
            <person name="Burrows L.L."/>
        </authorList>
    </citation>
    <scope>INTERACTION WITH PILC</scope>
</reference>
<reference key="7">
    <citation type="journal article" date="2017" name="PLoS Pathog.">
        <title>Interaction of the cyclic-di-GMP binding protein FimX and the Type 4 pilus assembly ATPase promotes pilus assembly.</title>
        <authorList>
            <person name="Jain R."/>
            <person name="Sliusarenko O."/>
            <person name="Kazmierczak B.I."/>
        </authorList>
    </citation>
    <scope>INTERACTION WITH FIMX</scope>
    <scope>FUNCTION</scope>
</reference>
<protein>
    <recommendedName>
        <fullName>Type IV pilus assembly ATPase PilB</fullName>
    </recommendedName>
</protein>
<name>PILB_PSEAE</name>
<evidence type="ECO:0000250" key="1">
    <source>
        <dbReference type="UniProtKB" id="Q1D098"/>
    </source>
</evidence>
<evidence type="ECO:0000250" key="2">
    <source>
        <dbReference type="UniProtKB" id="Q5SLC9"/>
    </source>
</evidence>
<evidence type="ECO:0000269" key="3">
    <source>
    </source>
</evidence>
<evidence type="ECO:0000269" key="4">
    <source>
    </source>
</evidence>
<evidence type="ECO:0000269" key="5">
    <source>
    </source>
</evidence>
<evidence type="ECO:0000269" key="6">
    <source>
    </source>
</evidence>
<evidence type="ECO:0000269" key="7">
    <source>
    </source>
</evidence>
<evidence type="ECO:0000305" key="8"/>
<evidence type="ECO:0000305" key="9">
    <source>
    </source>
</evidence>
<dbReference type="EMBL" id="M32066">
    <property type="protein sequence ID" value="AAA25732.1"/>
    <property type="molecule type" value="Genomic_DNA"/>
</dbReference>
<dbReference type="EMBL" id="AE004091">
    <property type="protein sequence ID" value="AAG07914.1"/>
    <property type="molecule type" value="Genomic_DNA"/>
</dbReference>
<dbReference type="PIR" id="A35384">
    <property type="entry name" value="A35384"/>
</dbReference>
<dbReference type="PIR" id="A83081">
    <property type="entry name" value="A83081"/>
</dbReference>
<dbReference type="RefSeq" id="NP_253216.1">
    <property type="nucleotide sequence ID" value="NC_002516.2"/>
</dbReference>
<dbReference type="RefSeq" id="WP_003112841.1">
    <property type="nucleotide sequence ID" value="NC_002516.2"/>
</dbReference>
<dbReference type="SMR" id="P22608"/>
<dbReference type="STRING" id="208964.PA4526"/>
<dbReference type="TCDB" id="3.A.15.2.1">
    <property type="family name" value="the outer membrane protein secreting main terminal branch (mtb) family"/>
</dbReference>
<dbReference type="PaxDb" id="208964-PA4526"/>
<dbReference type="GeneID" id="879459"/>
<dbReference type="KEGG" id="pae:PA4526"/>
<dbReference type="PATRIC" id="fig|208964.12.peg.4737"/>
<dbReference type="PseudoCAP" id="PA4526"/>
<dbReference type="HOGENOM" id="CLU_013446_10_1_6"/>
<dbReference type="InParanoid" id="P22608"/>
<dbReference type="OrthoDB" id="9804785at2"/>
<dbReference type="PhylomeDB" id="P22608"/>
<dbReference type="BioCyc" id="PAER208964:G1FZ6-4616-MONOMER"/>
<dbReference type="Proteomes" id="UP000002438">
    <property type="component" value="Chromosome"/>
</dbReference>
<dbReference type="GO" id="GO:0005737">
    <property type="term" value="C:cytoplasm"/>
    <property type="evidence" value="ECO:0007669"/>
    <property type="project" value="UniProtKB-SubCell"/>
</dbReference>
<dbReference type="GO" id="GO:0005886">
    <property type="term" value="C:plasma membrane"/>
    <property type="evidence" value="ECO:0000318"/>
    <property type="project" value="GO_Central"/>
</dbReference>
<dbReference type="GO" id="GO:0005524">
    <property type="term" value="F:ATP binding"/>
    <property type="evidence" value="ECO:0007669"/>
    <property type="project" value="UniProtKB-KW"/>
</dbReference>
<dbReference type="GO" id="GO:0016887">
    <property type="term" value="F:ATP hydrolysis activity"/>
    <property type="evidence" value="ECO:0000314"/>
    <property type="project" value="PseudoCAP"/>
</dbReference>
<dbReference type="GO" id="GO:0046872">
    <property type="term" value="F:metal ion binding"/>
    <property type="evidence" value="ECO:0007669"/>
    <property type="project" value="UniProtKB-KW"/>
</dbReference>
<dbReference type="GO" id="GO:0048870">
    <property type="term" value="P:cell motility"/>
    <property type="evidence" value="ECO:0000315"/>
    <property type="project" value="CACAO"/>
</dbReference>
<dbReference type="GO" id="GO:0015031">
    <property type="term" value="P:protein transport"/>
    <property type="evidence" value="ECO:0007669"/>
    <property type="project" value="UniProtKB-KW"/>
</dbReference>
<dbReference type="GO" id="GO:0043683">
    <property type="term" value="P:type IV pilus assembly"/>
    <property type="evidence" value="ECO:0000314"/>
    <property type="project" value="PseudoCAP"/>
</dbReference>
<dbReference type="GO" id="GO:0043107">
    <property type="term" value="P:type IV pilus-dependent motility"/>
    <property type="evidence" value="ECO:0000314"/>
    <property type="project" value="PseudoCAP"/>
</dbReference>
<dbReference type="CDD" id="cd01129">
    <property type="entry name" value="PulE-GspE-like"/>
    <property type="match status" value="1"/>
</dbReference>
<dbReference type="FunFam" id="3.30.450.90:FF:000001">
    <property type="entry name" value="Type II secretion system ATPase GspE"/>
    <property type="match status" value="1"/>
</dbReference>
<dbReference type="FunFam" id="3.40.50.300:FF:000398">
    <property type="entry name" value="Type IV pilus assembly ATPase PilB"/>
    <property type="match status" value="1"/>
</dbReference>
<dbReference type="Gene3D" id="3.30.450.90">
    <property type="match status" value="1"/>
</dbReference>
<dbReference type="Gene3D" id="3.40.50.300">
    <property type="entry name" value="P-loop containing nucleotide triphosphate hydrolases"/>
    <property type="match status" value="1"/>
</dbReference>
<dbReference type="Gene3D" id="3.30.300.160">
    <property type="entry name" value="Type II secretion system, protein E, N-terminal domain"/>
    <property type="match status" value="1"/>
</dbReference>
<dbReference type="InterPro" id="IPR013374">
    <property type="entry name" value="ATPase_typ4_pilus-assembl_PilB"/>
</dbReference>
<dbReference type="InterPro" id="IPR027417">
    <property type="entry name" value="P-loop_NTPase"/>
</dbReference>
<dbReference type="InterPro" id="IPR001482">
    <property type="entry name" value="T2SS/T4SS_dom"/>
</dbReference>
<dbReference type="InterPro" id="IPR037257">
    <property type="entry name" value="T2SS_E_N_sf"/>
</dbReference>
<dbReference type="InterPro" id="IPR007831">
    <property type="entry name" value="T2SS_GspE_N"/>
</dbReference>
<dbReference type="NCBIfam" id="TIGR02538">
    <property type="entry name" value="type_IV_pilB"/>
    <property type="match status" value="1"/>
</dbReference>
<dbReference type="PANTHER" id="PTHR30258:SF1">
    <property type="entry name" value="PROTEIN TRANSPORT PROTEIN HOFB HOMOLOG"/>
    <property type="match status" value="1"/>
</dbReference>
<dbReference type="PANTHER" id="PTHR30258">
    <property type="entry name" value="TYPE II SECRETION SYSTEM PROTEIN GSPE-RELATED"/>
    <property type="match status" value="1"/>
</dbReference>
<dbReference type="Pfam" id="PF05157">
    <property type="entry name" value="MshEN"/>
    <property type="match status" value="1"/>
</dbReference>
<dbReference type="Pfam" id="PF00437">
    <property type="entry name" value="T2SSE"/>
    <property type="match status" value="1"/>
</dbReference>
<dbReference type="SUPFAM" id="SSF160246">
    <property type="entry name" value="EspE N-terminal domain-like"/>
    <property type="match status" value="1"/>
</dbReference>
<dbReference type="SUPFAM" id="SSF52540">
    <property type="entry name" value="P-loop containing nucleoside triphosphate hydrolases"/>
    <property type="match status" value="1"/>
</dbReference>
<dbReference type="PROSITE" id="PS00662">
    <property type="entry name" value="T2SP_E"/>
    <property type="match status" value="1"/>
</dbReference>
<feature type="chain" id="PRO_0000207294" description="Type IV pilus assembly ATPase PilB">
    <location>
        <begin position="1"/>
        <end position="566"/>
    </location>
</feature>
<feature type="binding site" evidence="9">
    <location>
        <begin position="326"/>
        <end position="333"/>
    </location>
    <ligand>
        <name>ATP</name>
        <dbReference type="ChEBI" id="CHEBI:30616"/>
    </ligand>
</feature>
<feature type="binding site" evidence="2">
    <location>
        <position position="459"/>
    </location>
    <ligand>
        <name>Zn(2+)</name>
        <dbReference type="ChEBI" id="CHEBI:29105"/>
    </ligand>
</feature>
<feature type="binding site" evidence="2">
    <location>
        <position position="462"/>
    </location>
    <ligand>
        <name>Zn(2+)</name>
        <dbReference type="ChEBI" id="CHEBI:29105"/>
    </ligand>
</feature>
<feature type="binding site" evidence="2">
    <location>
        <position position="494"/>
    </location>
    <ligand>
        <name>Zn(2+)</name>
        <dbReference type="ChEBI" id="CHEBI:29105"/>
    </ligand>
</feature>
<feature type="binding site" evidence="2">
    <location>
        <position position="497"/>
    </location>
    <ligand>
        <name>Zn(2+)</name>
        <dbReference type="ChEBI" id="CHEBI:29105"/>
    </ligand>
</feature>
<feature type="sequence variant" description="In strain: PAK.">
    <original>V</original>
    <variation>L</variation>
    <location>
        <position position="26"/>
    </location>
</feature>
<feature type="sequence variant" description="In strain: PAK.">
    <original>A</original>
    <variation>T</variation>
    <location>
        <position position="30"/>
    </location>
</feature>
<feature type="sequence variant" description="In strain: PAK.">
    <original>S</original>
    <variation>N</variation>
    <location>
        <position position="46"/>
    </location>
</feature>
<feature type="sequence variant" description="In strain: PAK.">
    <original>K</original>
    <variation>R</variation>
    <location>
        <position position="74"/>
    </location>
</feature>
<feature type="sequence variant" description="In strain: PAK.">
    <original>P</original>
    <variation>A</variation>
    <location>
        <position position="109"/>
    </location>
</feature>
<feature type="sequence variant" description="In strain: PAK.">
    <original>S</original>
    <variation>N</variation>
    <location>
        <position position="146"/>
    </location>
</feature>
<feature type="sequence variant" description="In strain: PAK.">
    <original>IGSADKST</original>
    <variation>VGVKETSG</variation>
    <location>
        <begin position="164"/>
        <end position="171"/>
    </location>
</feature>
<feature type="sequence variant" description="In strain: PAK.">
    <original>AS</original>
    <variation>TG</variation>
    <location>
        <begin position="175"/>
        <end position="176"/>
    </location>
</feature>
<feature type="sequence variant" description="In strain: PAK.">
    <original>E</original>
    <variation>D</variation>
    <location>
        <position position="467"/>
    </location>
</feature>
<feature type="sequence variant" description="In strain: PAK.">
    <original>R</original>
    <variation>K</variation>
    <location>
        <position position="470"/>
    </location>
</feature>
<feature type="sequence variant" description="In strain: PAK.">
    <original>DK</original>
    <variation>EL</variation>
    <location>
        <begin position="481"/>
        <end position="482"/>
    </location>
</feature>
<feature type="mutagenesis site" description="Complete loss of pili formation." evidence="7">
    <original>G</original>
    <variation>S</variation>
    <location>
        <position position="331"/>
    </location>
</feature>
<feature type="mutagenesis site" description="About 70% reduced twitching motility." evidence="4">
    <original>E</original>
    <variation>Q</variation>
    <location>
        <position position="354"/>
    </location>
</feature>
<feature type="mutagenesis site" description="No loss of twitching motility." evidence="4">
    <original>D</original>
    <variation>N</variation>
    <location>
        <position position="355"/>
    </location>
</feature>
<feature type="mutagenesis site" description="Loss of twitching motility." evidence="4">
    <original>E</original>
    <variation>Q</variation>
    <location>
        <position position="358"/>
    </location>
</feature>
<feature type="mutagenesis site" description="Loss of twitching motility." evidence="4">
    <original>E</original>
    <variation>Q</variation>
    <location>
        <position position="396"/>
    </location>
</feature>
<feature type="mutagenesis site" description="Loss of twitching motility." evidence="4">
    <original>H</original>
    <variation>A</variation>
    <location>
        <position position="414"/>
    </location>
</feature>
<feature type="mutagenesis site" description="Loss of twitching motility." evidence="4">
    <original>H</original>
    <variation>A</variation>
    <location>
        <position position="421"/>
    </location>
</feature>
<gene>
    <name type="primary">pilB</name>
    <name type="ordered locus">PA4526</name>
</gene>
<comment type="function">
    <text evidence="1 3 4 6 7">ATPase component of the type IV pilus (T4P) that plays a role in surface and host cell adhesion, colonization, biofilm maturation, virulence, and twitching, a form of surface-associated motility facilitated by cycles of extension, adhesion, and retraction of T4P fibers (PubMed:15659660, PubMed:28854278). Acts as a molecular motor to provide the energy that is required for biogenesis of the pilus and the extrusion of substrates generated in the cytoplasm (PubMed:18174131, PubMed:8102361). PilB ATPase activity is also essential for T4P extension while antagonist PilT ATPase activity is required for T4P retraction (By similarity).</text>
</comment>
<comment type="subunit">
    <text evidence="2 5 6">Homohexamer (By similarity). Interacts with PilC (PubMed:23413032). Interacts with FimX; this interaction positively regulates T4P assembly and twitching motility by promoting the activity of the PilB ATPase (PubMed:28854278).</text>
</comment>
<comment type="subcellular location">
    <subcellularLocation>
        <location evidence="3">Cytoplasm</location>
    </subcellularLocation>
    <text evidence="3">Displays polar localization.</text>
</comment>
<comment type="domain">
    <text evidence="7">The ATP-binding site is essential for assembly of pili.</text>
</comment>
<comment type="disruption phenotype">
    <text evidence="3">Mutants fail to make pili although synthesize wild-type levels of the pilin subunit PilA.</text>
</comment>
<comment type="similarity">
    <text evidence="8">Belongs to the GSP E family.</text>
</comment>